<comment type="similarity">
    <text evidence="1">Belongs to the UPF0358 family.</text>
</comment>
<name>Y1086_LISMC</name>
<reference key="1">
    <citation type="journal article" date="2012" name="BMC Genomics">
        <title>Comparative genomics and transcriptomics of lineages I, II, and III strains of Listeria monocytogenes.</title>
        <authorList>
            <person name="Hain T."/>
            <person name="Ghai R."/>
            <person name="Billion A."/>
            <person name="Kuenne C.T."/>
            <person name="Steinweg C."/>
            <person name="Izar B."/>
            <person name="Mohamed W."/>
            <person name="Mraheil M."/>
            <person name="Domann E."/>
            <person name="Schaffrath S."/>
            <person name="Karst U."/>
            <person name="Goesmann A."/>
            <person name="Oehm S."/>
            <person name="Puhler A."/>
            <person name="Merkl R."/>
            <person name="Vorwerk S."/>
            <person name="Glaser P."/>
            <person name="Garrido P."/>
            <person name="Rusniok C."/>
            <person name="Buchrieser C."/>
            <person name="Goebel W."/>
            <person name="Chakraborty T."/>
        </authorList>
    </citation>
    <scope>NUCLEOTIDE SEQUENCE [LARGE SCALE GENOMIC DNA]</scope>
    <source>
        <strain>CLIP80459</strain>
    </source>
</reference>
<accession>C1L1Y7</accession>
<gene>
    <name type="ordered locus">Lm4b_01086</name>
</gene>
<protein>
    <recommendedName>
        <fullName evidence="1">UPF0358 protein Lm4b_01086</fullName>
    </recommendedName>
</protein>
<dbReference type="EMBL" id="FM242711">
    <property type="protein sequence ID" value="CAS04852.1"/>
    <property type="molecule type" value="Genomic_DNA"/>
</dbReference>
<dbReference type="RefSeq" id="WP_003725573.1">
    <property type="nucleotide sequence ID" value="NC_012488.1"/>
</dbReference>
<dbReference type="SMR" id="C1L1Y7"/>
<dbReference type="KEGG" id="lmc:Lm4b_01086"/>
<dbReference type="HOGENOM" id="CLU_160493_1_0_9"/>
<dbReference type="Gene3D" id="1.10.287.750">
    <property type="entry name" value="SO2669-like"/>
    <property type="match status" value="1"/>
</dbReference>
<dbReference type="HAMAP" id="MF_01560">
    <property type="entry name" value="UPF0358"/>
    <property type="match status" value="1"/>
</dbReference>
<dbReference type="InterPro" id="IPR009983">
    <property type="entry name" value="UPF0358"/>
</dbReference>
<dbReference type="InterPro" id="IPR036270">
    <property type="entry name" value="UPF0358_sf"/>
</dbReference>
<dbReference type="NCBIfam" id="NF010187">
    <property type="entry name" value="PRK13666.1"/>
    <property type="match status" value="1"/>
</dbReference>
<dbReference type="Pfam" id="PF07408">
    <property type="entry name" value="DUF1507"/>
    <property type="match status" value="1"/>
</dbReference>
<dbReference type="SUPFAM" id="SSF140404">
    <property type="entry name" value="EF2458-like"/>
    <property type="match status" value="1"/>
</dbReference>
<proteinExistence type="inferred from homology"/>
<feature type="chain" id="PRO_1000215506" description="UPF0358 protein Lm4b_01086">
    <location>
        <begin position="1"/>
        <end position="93"/>
    </location>
</feature>
<evidence type="ECO:0000255" key="1">
    <source>
        <dbReference type="HAMAP-Rule" id="MF_01560"/>
    </source>
</evidence>
<organism>
    <name type="scientific">Listeria monocytogenes serotype 4b (strain CLIP80459)</name>
    <dbReference type="NCBI Taxonomy" id="568819"/>
    <lineage>
        <taxon>Bacteria</taxon>
        <taxon>Bacillati</taxon>
        <taxon>Bacillota</taxon>
        <taxon>Bacilli</taxon>
        <taxon>Bacillales</taxon>
        <taxon>Listeriaceae</taxon>
        <taxon>Listeria</taxon>
    </lineage>
</organism>
<sequence>MANKKIDHREEAVELLKQDAKRILQLIKVQMDNLTLPQCPAYEEVLDTQMYGLSREINFATRLGLIEPEEGKKLMSTLEKELSTLHELSMSKK</sequence>